<feature type="chain" id="PRO_0000071029" description="DnaJ homolog subfamily B member 8">
    <location>
        <begin position="1"/>
        <end position="232"/>
    </location>
</feature>
<feature type="domain" description="J" evidence="1">
    <location>
        <begin position="3"/>
        <end position="69"/>
    </location>
</feature>
<feature type="sequence variant" id="VAR_033881" description="In dbSNP:rs35948511.">
    <original>M</original>
    <variation>L</variation>
    <location>
        <position position="153"/>
    </location>
</feature>
<feature type="mutagenesis site" description="Significant loss of activity." evidence="2">
    <original>K</original>
    <variation>A</variation>
    <location>
        <position position="216"/>
    </location>
</feature>
<feature type="helix" evidence="3">
    <location>
        <begin position="4"/>
        <end position="8"/>
    </location>
</feature>
<feature type="helix" evidence="3">
    <location>
        <begin position="18"/>
        <end position="29"/>
    </location>
</feature>
<feature type="turn" evidence="3">
    <location>
        <begin position="32"/>
        <end position="34"/>
    </location>
</feature>
<feature type="helix" evidence="3">
    <location>
        <begin position="40"/>
        <end position="57"/>
    </location>
</feature>
<feature type="helix" evidence="3">
    <location>
        <begin position="59"/>
        <end position="68"/>
    </location>
</feature>
<feature type="strand" evidence="4">
    <location>
        <begin position="148"/>
        <end position="150"/>
    </location>
</feature>
<accession>Q8NHS0</accession>
<accession>B3KWV7</accession>
<gene>
    <name type="primary">DNAJB8</name>
</gene>
<protein>
    <recommendedName>
        <fullName>DnaJ homolog subfamily B member 8</fullName>
    </recommendedName>
</protein>
<evidence type="ECO:0000255" key="1">
    <source>
        <dbReference type="PROSITE-ProRule" id="PRU00286"/>
    </source>
</evidence>
<evidence type="ECO:0000269" key="2">
    <source>
    </source>
</evidence>
<evidence type="ECO:0007829" key="3">
    <source>
        <dbReference type="PDB" id="2DMX"/>
    </source>
</evidence>
<evidence type="ECO:0007829" key="4">
    <source>
        <dbReference type="PDB" id="8DTS"/>
    </source>
</evidence>
<comment type="function">
    <text evidence="2">Efficient suppressor of aggregation and toxicity of disease-associated polyglutamine proteins.</text>
</comment>
<comment type="subunit">
    <text evidence="2">Interacts with histone deacetylases HDAC4, HDAC6, and SIRT2, HDAC activity is required for antiaggregation.</text>
</comment>
<comment type="domain">
    <text>The antiaggregation activity resides in the serine-rich region and the C-terminus.</text>
</comment>
<organism>
    <name type="scientific">Homo sapiens</name>
    <name type="common">Human</name>
    <dbReference type="NCBI Taxonomy" id="9606"/>
    <lineage>
        <taxon>Eukaryota</taxon>
        <taxon>Metazoa</taxon>
        <taxon>Chordata</taxon>
        <taxon>Craniata</taxon>
        <taxon>Vertebrata</taxon>
        <taxon>Euteleostomi</taxon>
        <taxon>Mammalia</taxon>
        <taxon>Eutheria</taxon>
        <taxon>Euarchontoglires</taxon>
        <taxon>Primates</taxon>
        <taxon>Haplorrhini</taxon>
        <taxon>Catarrhini</taxon>
        <taxon>Hominidae</taxon>
        <taxon>Homo</taxon>
    </lineage>
</organism>
<dbReference type="EMBL" id="AK125946">
    <property type="protein sequence ID" value="BAG54269.1"/>
    <property type="molecule type" value="mRNA"/>
</dbReference>
<dbReference type="EMBL" id="AK126068">
    <property type="protein sequence ID" value="BAG54285.1"/>
    <property type="molecule type" value="mRNA"/>
</dbReference>
<dbReference type="EMBL" id="CH471052">
    <property type="protein sequence ID" value="EAW79320.1"/>
    <property type="molecule type" value="Genomic_DNA"/>
</dbReference>
<dbReference type="EMBL" id="BC029521">
    <property type="protein sequence ID" value="AAH29521.1"/>
    <property type="molecule type" value="mRNA"/>
</dbReference>
<dbReference type="EMBL" id="BC050288">
    <property type="protein sequence ID" value="AAH50288.1"/>
    <property type="molecule type" value="mRNA"/>
</dbReference>
<dbReference type="CCDS" id="CCDS3048.1"/>
<dbReference type="RefSeq" id="NP_699161.1">
    <property type="nucleotide sequence ID" value="NM_153330.6"/>
</dbReference>
<dbReference type="RefSeq" id="XP_006713582.1">
    <property type="nucleotide sequence ID" value="XM_006713519.3"/>
</dbReference>
<dbReference type="PDB" id="2DMX">
    <property type="method" value="NMR"/>
    <property type="chains" value="A=1-79"/>
</dbReference>
<dbReference type="PDB" id="8DTS">
    <property type="method" value="X-ray"/>
    <property type="resolution" value="0.75 A"/>
    <property type="chains" value="A/B/C/D/E/F/G/H/I/J/K/L=147-152"/>
</dbReference>
<dbReference type="PDBsum" id="2DMX"/>
<dbReference type="PDBsum" id="8DTS"/>
<dbReference type="BMRB" id="Q8NHS0"/>
<dbReference type="SMR" id="Q8NHS0"/>
<dbReference type="BioGRID" id="127919">
    <property type="interactions" value="82"/>
</dbReference>
<dbReference type="FunCoup" id="Q8NHS0">
    <property type="interactions" value="420"/>
</dbReference>
<dbReference type="IntAct" id="Q8NHS0">
    <property type="interactions" value="27"/>
</dbReference>
<dbReference type="STRING" id="9606.ENSP00000417418"/>
<dbReference type="iPTMnet" id="Q8NHS0"/>
<dbReference type="PhosphoSitePlus" id="Q8NHS0"/>
<dbReference type="BioMuta" id="DNAJB8"/>
<dbReference type="DMDM" id="27805461"/>
<dbReference type="jPOST" id="Q8NHS0"/>
<dbReference type="MassIVE" id="Q8NHS0"/>
<dbReference type="PaxDb" id="9606-ENSP00000417418"/>
<dbReference type="PeptideAtlas" id="Q8NHS0"/>
<dbReference type="ProteomicsDB" id="73744"/>
<dbReference type="Antibodypedia" id="33195">
    <property type="antibodies" value="104 antibodies from 18 providers"/>
</dbReference>
<dbReference type="DNASU" id="165721"/>
<dbReference type="Ensembl" id="ENST00000319153.4">
    <property type="protein sequence ID" value="ENSP00000316053.3"/>
    <property type="gene ID" value="ENSG00000179407.4"/>
</dbReference>
<dbReference type="Ensembl" id="ENST00000469083.1">
    <property type="protein sequence ID" value="ENSP00000417418.1"/>
    <property type="gene ID" value="ENSG00000179407.4"/>
</dbReference>
<dbReference type="GeneID" id="165721"/>
<dbReference type="KEGG" id="hsa:165721"/>
<dbReference type="MANE-Select" id="ENST00000319153.4">
    <property type="protein sequence ID" value="ENSP00000316053.3"/>
    <property type="RefSeq nucleotide sequence ID" value="NM_153330.6"/>
    <property type="RefSeq protein sequence ID" value="NP_699161.1"/>
</dbReference>
<dbReference type="UCSC" id="uc003ekk.3">
    <property type="organism name" value="human"/>
</dbReference>
<dbReference type="AGR" id="HGNC:23699"/>
<dbReference type="CTD" id="165721"/>
<dbReference type="DisGeNET" id="165721"/>
<dbReference type="GeneCards" id="DNAJB8"/>
<dbReference type="HGNC" id="HGNC:23699">
    <property type="gene designation" value="DNAJB8"/>
</dbReference>
<dbReference type="HPA" id="ENSG00000179407">
    <property type="expression patterns" value="Tissue enriched (testis)"/>
</dbReference>
<dbReference type="MIM" id="611337">
    <property type="type" value="gene"/>
</dbReference>
<dbReference type="neXtProt" id="NX_Q8NHS0"/>
<dbReference type="OpenTargets" id="ENSG00000179407"/>
<dbReference type="PharmGKB" id="PA134881798"/>
<dbReference type="VEuPathDB" id="HostDB:ENSG00000179407"/>
<dbReference type="eggNOG" id="KOG0714">
    <property type="taxonomic scope" value="Eukaryota"/>
</dbReference>
<dbReference type="GeneTree" id="ENSGT00940000162567"/>
<dbReference type="HOGENOM" id="CLU_017633_12_0_1"/>
<dbReference type="InParanoid" id="Q8NHS0"/>
<dbReference type="OMA" id="FDFWDNP"/>
<dbReference type="OrthoDB" id="10250354at2759"/>
<dbReference type="PAN-GO" id="Q8NHS0">
    <property type="GO annotations" value="6 GO annotations based on evolutionary models"/>
</dbReference>
<dbReference type="PhylomeDB" id="Q8NHS0"/>
<dbReference type="TreeFam" id="TF105142"/>
<dbReference type="PathwayCommons" id="Q8NHS0"/>
<dbReference type="SignaLink" id="Q8NHS0"/>
<dbReference type="BioGRID-ORCS" id="165721">
    <property type="hits" value="11 hits in 1148 CRISPR screens"/>
</dbReference>
<dbReference type="EvolutionaryTrace" id="Q8NHS0"/>
<dbReference type="GenomeRNAi" id="165721"/>
<dbReference type="Pharos" id="Q8NHS0">
    <property type="development level" value="Tbio"/>
</dbReference>
<dbReference type="PRO" id="PR:Q8NHS0"/>
<dbReference type="Proteomes" id="UP000005640">
    <property type="component" value="Chromosome 3"/>
</dbReference>
<dbReference type="RNAct" id="Q8NHS0">
    <property type="molecule type" value="protein"/>
</dbReference>
<dbReference type="Bgee" id="ENSG00000179407">
    <property type="expression patterns" value="Expressed in sperm and 28 other cell types or tissues"/>
</dbReference>
<dbReference type="ExpressionAtlas" id="Q8NHS0">
    <property type="expression patterns" value="baseline and differential"/>
</dbReference>
<dbReference type="GO" id="GO:0005737">
    <property type="term" value="C:cytoplasm"/>
    <property type="evidence" value="ECO:0000318"/>
    <property type="project" value="GO_Central"/>
</dbReference>
<dbReference type="GO" id="GO:0005829">
    <property type="term" value="C:cytosol"/>
    <property type="evidence" value="ECO:0000314"/>
    <property type="project" value="UniProtKB"/>
</dbReference>
<dbReference type="GO" id="GO:0005634">
    <property type="term" value="C:nucleus"/>
    <property type="evidence" value="ECO:0000314"/>
    <property type="project" value="UniProtKB"/>
</dbReference>
<dbReference type="GO" id="GO:0030544">
    <property type="term" value="F:Hsp70 protein binding"/>
    <property type="evidence" value="ECO:0007669"/>
    <property type="project" value="InterPro"/>
</dbReference>
<dbReference type="GO" id="GO:0044183">
    <property type="term" value="F:protein folding chaperone"/>
    <property type="evidence" value="ECO:0000314"/>
    <property type="project" value="MGI"/>
</dbReference>
<dbReference type="GO" id="GO:0051087">
    <property type="term" value="F:protein-folding chaperone binding"/>
    <property type="evidence" value="ECO:0000353"/>
    <property type="project" value="UniProtKB"/>
</dbReference>
<dbReference type="GO" id="GO:0051082">
    <property type="term" value="F:unfolded protein binding"/>
    <property type="evidence" value="ECO:0000314"/>
    <property type="project" value="UniProtKB"/>
</dbReference>
<dbReference type="GO" id="GO:0061077">
    <property type="term" value="P:chaperone-mediated protein folding"/>
    <property type="evidence" value="ECO:0000314"/>
    <property type="project" value="MGI"/>
</dbReference>
<dbReference type="GO" id="GO:0090084">
    <property type="term" value="P:negative regulation of inclusion body assembly"/>
    <property type="evidence" value="ECO:0000314"/>
    <property type="project" value="UniProtKB"/>
</dbReference>
<dbReference type="CDD" id="cd06257">
    <property type="entry name" value="DnaJ"/>
    <property type="match status" value="1"/>
</dbReference>
<dbReference type="FunFam" id="1.10.287.110:FF:000021">
    <property type="entry name" value="DnaJ (Hsp40) homolog, subfamily B, member 2"/>
    <property type="match status" value="1"/>
</dbReference>
<dbReference type="Gene3D" id="1.10.287.110">
    <property type="entry name" value="DnaJ domain"/>
    <property type="match status" value="1"/>
</dbReference>
<dbReference type="InterPro" id="IPR001623">
    <property type="entry name" value="DnaJ_domain"/>
</dbReference>
<dbReference type="InterPro" id="IPR018253">
    <property type="entry name" value="DnaJ_domain_CS"/>
</dbReference>
<dbReference type="InterPro" id="IPR043183">
    <property type="entry name" value="DNJB2/6-like"/>
</dbReference>
<dbReference type="InterPro" id="IPR036869">
    <property type="entry name" value="J_dom_sf"/>
</dbReference>
<dbReference type="PANTHER" id="PTHR45168:SF2">
    <property type="entry name" value="DNAJ HEAT SHOCK PROTEIN FAMILY (HSP40) MEMBER B8"/>
    <property type="match status" value="1"/>
</dbReference>
<dbReference type="PANTHER" id="PTHR45168">
    <property type="entry name" value="DNAJ HOMOLOG SUBFAMILY B MEMBER 2"/>
    <property type="match status" value="1"/>
</dbReference>
<dbReference type="Pfam" id="PF00226">
    <property type="entry name" value="DnaJ"/>
    <property type="match status" value="1"/>
</dbReference>
<dbReference type="PRINTS" id="PR00625">
    <property type="entry name" value="JDOMAIN"/>
</dbReference>
<dbReference type="SMART" id="SM00271">
    <property type="entry name" value="DnaJ"/>
    <property type="match status" value="1"/>
</dbReference>
<dbReference type="SUPFAM" id="SSF46565">
    <property type="entry name" value="Chaperone J-domain"/>
    <property type="match status" value="1"/>
</dbReference>
<dbReference type="PROSITE" id="PS00636">
    <property type="entry name" value="DNAJ_1"/>
    <property type="match status" value="1"/>
</dbReference>
<dbReference type="PROSITE" id="PS50076">
    <property type="entry name" value="DNAJ_2"/>
    <property type="match status" value="1"/>
</dbReference>
<name>DNJB8_HUMAN</name>
<reference key="1">
    <citation type="journal article" date="2004" name="Nat. Genet.">
        <title>Complete sequencing and characterization of 21,243 full-length human cDNAs.</title>
        <authorList>
            <person name="Ota T."/>
            <person name="Suzuki Y."/>
            <person name="Nishikawa T."/>
            <person name="Otsuki T."/>
            <person name="Sugiyama T."/>
            <person name="Irie R."/>
            <person name="Wakamatsu A."/>
            <person name="Hayashi K."/>
            <person name="Sato H."/>
            <person name="Nagai K."/>
            <person name="Kimura K."/>
            <person name="Makita H."/>
            <person name="Sekine M."/>
            <person name="Obayashi M."/>
            <person name="Nishi T."/>
            <person name="Shibahara T."/>
            <person name="Tanaka T."/>
            <person name="Ishii S."/>
            <person name="Yamamoto J."/>
            <person name="Saito K."/>
            <person name="Kawai Y."/>
            <person name="Isono Y."/>
            <person name="Nakamura Y."/>
            <person name="Nagahari K."/>
            <person name="Murakami K."/>
            <person name="Yasuda T."/>
            <person name="Iwayanagi T."/>
            <person name="Wagatsuma M."/>
            <person name="Shiratori A."/>
            <person name="Sudo H."/>
            <person name="Hosoiri T."/>
            <person name="Kaku Y."/>
            <person name="Kodaira H."/>
            <person name="Kondo H."/>
            <person name="Sugawara M."/>
            <person name="Takahashi M."/>
            <person name="Kanda K."/>
            <person name="Yokoi T."/>
            <person name="Furuya T."/>
            <person name="Kikkawa E."/>
            <person name="Omura Y."/>
            <person name="Abe K."/>
            <person name="Kamihara K."/>
            <person name="Katsuta N."/>
            <person name="Sato K."/>
            <person name="Tanikawa M."/>
            <person name="Yamazaki M."/>
            <person name="Ninomiya K."/>
            <person name="Ishibashi T."/>
            <person name="Yamashita H."/>
            <person name="Murakawa K."/>
            <person name="Fujimori K."/>
            <person name="Tanai H."/>
            <person name="Kimata M."/>
            <person name="Watanabe M."/>
            <person name="Hiraoka S."/>
            <person name="Chiba Y."/>
            <person name="Ishida S."/>
            <person name="Ono Y."/>
            <person name="Takiguchi S."/>
            <person name="Watanabe S."/>
            <person name="Yosida M."/>
            <person name="Hotuta T."/>
            <person name="Kusano J."/>
            <person name="Kanehori K."/>
            <person name="Takahashi-Fujii A."/>
            <person name="Hara H."/>
            <person name="Tanase T.-O."/>
            <person name="Nomura Y."/>
            <person name="Togiya S."/>
            <person name="Komai F."/>
            <person name="Hara R."/>
            <person name="Takeuchi K."/>
            <person name="Arita M."/>
            <person name="Imose N."/>
            <person name="Musashino K."/>
            <person name="Yuuki H."/>
            <person name="Oshima A."/>
            <person name="Sasaki N."/>
            <person name="Aotsuka S."/>
            <person name="Yoshikawa Y."/>
            <person name="Matsunawa H."/>
            <person name="Ichihara T."/>
            <person name="Shiohata N."/>
            <person name="Sano S."/>
            <person name="Moriya S."/>
            <person name="Momiyama H."/>
            <person name="Satoh N."/>
            <person name="Takami S."/>
            <person name="Terashima Y."/>
            <person name="Suzuki O."/>
            <person name="Nakagawa S."/>
            <person name="Senoh A."/>
            <person name="Mizoguchi H."/>
            <person name="Goto Y."/>
            <person name="Shimizu F."/>
            <person name="Wakebe H."/>
            <person name="Hishigaki H."/>
            <person name="Watanabe T."/>
            <person name="Sugiyama A."/>
            <person name="Takemoto M."/>
            <person name="Kawakami B."/>
            <person name="Yamazaki M."/>
            <person name="Watanabe K."/>
            <person name="Kumagai A."/>
            <person name="Itakura S."/>
            <person name="Fukuzumi Y."/>
            <person name="Fujimori Y."/>
            <person name="Komiyama M."/>
            <person name="Tashiro H."/>
            <person name="Tanigami A."/>
            <person name="Fujiwara T."/>
            <person name="Ono T."/>
            <person name="Yamada K."/>
            <person name="Fujii Y."/>
            <person name="Ozaki K."/>
            <person name="Hirao M."/>
            <person name="Ohmori Y."/>
            <person name="Kawabata A."/>
            <person name="Hikiji T."/>
            <person name="Kobatake N."/>
            <person name="Inagaki H."/>
            <person name="Ikema Y."/>
            <person name="Okamoto S."/>
            <person name="Okitani R."/>
            <person name="Kawakami T."/>
            <person name="Noguchi S."/>
            <person name="Itoh T."/>
            <person name="Shigeta K."/>
            <person name="Senba T."/>
            <person name="Matsumura K."/>
            <person name="Nakajima Y."/>
            <person name="Mizuno T."/>
            <person name="Morinaga M."/>
            <person name="Sasaki M."/>
            <person name="Togashi T."/>
            <person name="Oyama M."/>
            <person name="Hata H."/>
            <person name="Watanabe M."/>
            <person name="Komatsu T."/>
            <person name="Mizushima-Sugano J."/>
            <person name="Satoh T."/>
            <person name="Shirai Y."/>
            <person name="Takahashi Y."/>
            <person name="Nakagawa K."/>
            <person name="Okumura K."/>
            <person name="Nagase T."/>
            <person name="Nomura N."/>
            <person name="Kikuchi H."/>
            <person name="Masuho Y."/>
            <person name="Yamashita R."/>
            <person name="Nakai K."/>
            <person name="Yada T."/>
            <person name="Nakamura Y."/>
            <person name="Ohara O."/>
            <person name="Isogai T."/>
            <person name="Sugano S."/>
        </authorList>
    </citation>
    <scope>NUCLEOTIDE SEQUENCE [LARGE SCALE MRNA]</scope>
    <source>
        <tissue>Testis</tissue>
    </source>
</reference>
<reference key="2">
    <citation type="submission" date="2005-09" db="EMBL/GenBank/DDBJ databases">
        <authorList>
            <person name="Mural R.J."/>
            <person name="Istrail S."/>
            <person name="Sutton G."/>
            <person name="Florea L."/>
            <person name="Halpern A.L."/>
            <person name="Mobarry C.M."/>
            <person name="Lippert R."/>
            <person name="Walenz B."/>
            <person name="Shatkay H."/>
            <person name="Dew I."/>
            <person name="Miller J.R."/>
            <person name="Flanigan M.J."/>
            <person name="Edwards N.J."/>
            <person name="Bolanos R."/>
            <person name="Fasulo D."/>
            <person name="Halldorsson B.V."/>
            <person name="Hannenhalli S."/>
            <person name="Turner R."/>
            <person name="Yooseph S."/>
            <person name="Lu F."/>
            <person name="Nusskern D.R."/>
            <person name="Shue B.C."/>
            <person name="Zheng X.H."/>
            <person name="Zhong F."/>
            <person name="Delcher A.L."/>
            <person name="Huson D.H."/>
            <person name="Kravitz S.A."/>
            <person name="Mouchard L."/>
            <person name="Reinert K."/>
            <person name="Remington K.A."/>
            <person name="Clark A.G."/>
            <person name="Waterman M.S."/>
            <person name="Eichler E.E."/>
            <person name="Adams M.D."/>
            <person name="Hunkapiller M.W."/>
            <person name="Myers E.W."/>
            <person name="Venter J.C."/>
        </authorList>
    </citation>
    <scope>NUCLEOTIDE SEQUENCE [LARGE SCALE GENOMIC DNA]</scope>
</reference>
<reference key="3">
    <citation type="journal article" date="2004" name="Genome Res.">
        <title>The status, quality, and expansion of the NIH full-length cDNA project: the Mammalian Gene Collection (MGC).</title>
        <authorList>
            <consortium name="The MGC Project Team"/>
        </authorList>
    </citation>
    <scope>NUCLEOTIDE SEQUENCE [LARGE SCALE MRNA]</scope>
    <source>
        <tissue>Testis</tissue>
    </source>
</reference>
<reference key="4">
    <citation type="journal article" date="2010" name="Mol. Cell">
        <title>A DNAJB chaperone subfamily with HDAC-dependent activities suppresses toxic protein aggregation.</title>
        <authorList>
            <person name="Hageman J."/>
            <person name="Rujano M.A."/>
            <person name="van Waarde M.A."/>
            <person name="Kakkar V."/>
            <person name="Dirks R.P."/>
            <person name="Govorukhina N."/>
            <person name="Oosterveld-Hut H.M."/>
            <person name="Lubsen N.H."/>
            <person name="Kampinga H.H."/>
        </authorList>
    </citation>
    <scope>FUNCTION</scope>
    <scope>INTERACTION WITH HDACS</scope>
    <scope>MUTAGENESIS OF LYS-216</scope>
</reference>
<reference key="5">
    <citation type="submission" date="2006-10" db="PDB data bank">
        <title>Solution structure of the J domain of DnaJ homolog subfamily B member 8.</title>
        <authorList>
            <consortium name="RIKEN structural genomics initiative (RSGI)"/>
        </authorList>
    </citation>
    <scope>STRUCTURE BY NMR OF 1-82</scope>
</reference>
<sequence>MANYYEVLGVQASASPEDIKKAYRKLALRWHPDKNPDNKEEAEKKFKLVSEAYEVLSDSKKRSLYDRAGCDSWRAGGGASTPYHSPFDTGYTFRNPEDIFREFFGGLDPFSFEFWDSPFNSDRGGRGHGLRGAFSAGFGEFPAFMEAFSSFNMLGCSGGSHTTFSSTSFGGSSSGSSGFKSVMSSTEMINGHKVTTKRIVENGQERVEVEEDGQLKSVTVNGKEQLKWMDSK</sequence>
<keyword id="KW-0002">3D-structure</keyword>
<keyword id="KW-0143">Chaperone</keyword>
<keyword id="KW-1267">Proteomics identification</keyword>
<keyword id="KW-1185">Reference proteome</keyword>
<proteinExistence type="evidence at protein level"/>